<organism>
    <name type="scientific">Sterkiella nova</name>
    <name type="common">Ciliate</name>
    <name type="synonym">Oxytricha nova</name>
    <dbReference type="NCBI Taxonomy" id="200597"/>
    <lineage>
        <taxon>Eukaryota</taxon>
        <taxon>Sar</taxon>
        <taxon>Alveolata</taxon>
        <taxon>Ciliophora</taxon>
        <taxon>Intramacronucleata</taxon>
        <taxon>Spirotrichea</taxon>
        <taxon>Stichotrichia</taxon>
        <taxon>Sporadotrichida</taxon>
        <taxon>Oxytrichidae</taxon>
        <taxon>Stylonychinae</taxon>
        <taxon>Sterkiella</taxon>
    </lineage>
</organism>
<reference key="1">
    <citation type="submission" date="1997-04" db="EMBL/GenBank/DDBJ databases">
        <authorList>
            <person name="Pearlman R.E."/>
        </authorList>
    </citation>
    <scope>NUCLEOTIDE SEQUENCE [GENOMIC DNA]</scope>
</reference>
<feature type="chain" id="PRO_0000145857" description="Phosphoglycerate kinase">
    <location>
        <begin position="1"/>
        <end position="419"/>
    </location>
</feature>
<feature type="binding site" evidence="2">
    <location>
        <position position="24"/>
    </location>
    <ligand>
        <name>(2R)-3-phosphoglycerate</name>
        <dbReference type="ChEBI" id="CHEBI:58272"/>
    </ligand>
</feature>
<feature type="binding site" evidence="3">
    <location>
        <position position="25"/>
    </location>
    <ligand>
        <name>(2R)-3-phosphoglycerate</name>
        <dbReference type="ChEBI" id="CHEBI:58272"/>
    </ligand>
</feature>
<feature type="binding site" evidence="2">
    <location>
        <position position="26"/>
    </location>
    <ligand>
        <name>(2R)-3-phosphoglycerate</name>
        <dbReference type="ChEBI" id="CHEBI:58272"/>
    </ligand>
</feature>
<feature type="binding site" evidence="3">
    <location>
        <position position="27"/>
    </location>
    <ligand>
        <name>(2R)-3-phosphoglycerate</name>
        <dbReference type="ChEBI" id="CHEBI:58272"/>
    </ligand>
</feature>
<feature type="binding site" evidence="3">
    <location>
        <position position="40"/>
    </location>
    <ligand>
        <name>(2R)-3-phosphoglycerate</name>
        <dbReference type="ChEBI" id="CHEBI:58272"/>
    </ligand>
</feature>
<feature type="binding site" evidence="2">
    <location>
        <position position="63"/>
    </location>
    <ligand>
        <name>(2R)-3-phosphoglycerate</name>
        <dbReference type="ChEBI" id="CHEBI:58272"/>
    </ligand>
</feature>
<feature type="binding site" evidence="3">
    <location>
        <position position="64"/>
    </location>
    <ligand>
        <name>(2R)-3-phosphoglycerate</name>
        <dbReference type="ChEBI" id="CHEBI:58272"/>
    </ligand>
</feature>
<feature type="binding site" evidence="2">
    <location>
        <position position="66"/>
    </location>
    <ligand>
        <name>(2R)-3-phosphoglycerate</name>
        <dbReference type="ChEBI" id="CHEBI:58272"/>
    </ligand>
</feature>
<feature type="binding site" evidence="3">
    <location>
        <position position="67"/>
    </location>
    <ligand>
        <name>(2R)-3-phosphoglycerate</name>
        <dbReference type="ChEBI" id="CHEBI:58272"/>
    </ligand>
</feature>
<feature type="binding site" evidence="2">
    <location>
        <position position="122"/>
    </location>
    <ligand>
        <name>(2R)-3-phosphoglycerate</name>
        <dbReference type="ChEBI" id="CHEBI:58272"/>
    </ligand>
</feature>
<feature type="binding site" evidence="3">
    <location>
        <position position="123"/>
    </location>
    <ligand>
        <name>(2R)-3-phosphoglycerate</name>
        <dbReference type="ChEBI" id="CHEBI:58272"/>
    </ligand>
</feature>
<feature type="binding site" evidence="2">
    <location>
        <position position="169"/>
    </location>
    <ligand>
        <name>(2R)-3-phosphoglycerate</name>
        <dbReference type="ChEBI" id="CHEBI:58272"/>
    </ligand>
</feature>
<feature type="binding site" evidence="3">
    <location>
        <position position="170"/>
    </location>
    <ligand>
        <name>(2R)-3-phosphoglycerate</name>
        <dbReference type="ChEBI" id="CHEBI:58272"/>
    </ligand>
</feature>
<feature type="binding site" evidence="2">
    <location>
        <position position="213"/>
    </location>
    <ligand>
        <name>ADP</name>
        <dbReference type="ChEBI" id="CHEBI:456216"/>
    </ligand>
</feature>
<feature type="binding site" evidence="2">
    <location>
        <position position="213"/>
    </location>
    <ligand>
        <name>CDP</name>
        <dbReference type="ChEBI" id="CHEBI:58069"/>
    </ligand>
</feature>
<feature type="binding site" evidence="3">
    <location>
        <position position="214"/>
    </location>
    <ligand>
        <name>AMP</name>
        <dbReference type="ChEBI" id="CHEBI:456215"/>
    </ligand>
</feature>
<feature type="binding site" evidence="3">
    <location>
        <position position="214"/>
    </location>
    <ligand>
        <name>ATP</name>
        <dbReference type="ChEBI" id="CHEBI:30616"/>
    </ligand>
</feature>
<feature type="binding site" evidence="2">
    <location>
        <position position="214"/>
    </location>
    <ligand>
        <name>Mg(2+)</name>
        <dbReference type="ChEBI" id="CHEBI:18420"/>
    </ligand>
</feature>
<feature type="binding site" evidence="3">
    <location>
        <position position="215"/>
    </location>
    <ligand>
        <name>AMP</name>
        <dbReference type="ChEBI" id="CHEBI:456215"/>
    </ligand>
</feature>
<feature type="binding site" evidence="2">
    <location>
        <position position="217"/>
    </location>
    <ligand>
        <name>Mg(2+)</name>
        <dbReference type="ChEBI" id="CHEBI:18420"/>
    </ligand>
</feature>
<feature type="binding site" evidence="2">
    <location>
        <position position="218"/>
    </location>
    <ligand>
        <name>CDP</name>
        <dbReference type="ChEBI" id="CHEBI:58069"/>
    </ligand>
</feature>
<feature type="binding site" evidence="2">
    <location>
        <position position="218"/>
    </location>
    <ligand>
        <name>Mg(2+)</name>
        <dbReference type="ChEBI" id="CHEBI:18420"/>
    </ligand>
</feature>
<feature type="binding site" evidence="3">
    <location>
        <position position="219"/>
    </location>
    <ligand>
        <name>AMP</name>
        <dbReference type="ChEBI" id="CHEBI:456215"/>
    </ligand>
</feature>
<feature type="binding site" evidence="3">
    <location>
        <position position="219"/>
    </location>
    <ligand>
        <name>ATP</name>
        <dbReference type="ChEBI" id="CHEBI:30616"/>
    </ligand>
</feature>
<feature type="binding site" evidence="2">
    <location>
        <position position="237"/>
    </location>
    <ligand>
        <name>ADP</name>
        <dbReference type="ChEBI" id="CHEBI:456216"/>
    </ligand>
</feature>
<feature type="binding site" evidence="2">
    <location>
        <position position="237"/>
    </location>
    <ligand>
        <name>CDP</name>
        <dbReference type="ChEBI" id="CHEBI:58069"/>
    </ligand>
</feature>
<feature type="binding site" evidence="3">
    <location>
        <position position="238"/>
    </location>
    <ligand>
        <name>AMP</name>
        <dbReference type="ChEBI" id="CHEBI:456215"/>
    </ligand>
</feature>
<feature type="binding site" evidence="3">
    <location>
        <position position="238"/>
    </location>
    <ligand>
        <name>ATP</name>
        <dbReference type="ChEBI" id="CHEBI:30616"/>
    </ligand>
</feature>
<feature type="binding site" evidence="3">
    <location>
        <position position="313"/>
    </location>
    <ligand>
        <name>AMP</name>
        <dbReference type="ChEBI" id="CHEBI:456215"/>
    </ligand>
</feature>
<feature type="binding site" evidence="3">
    <location>
        <position position="313"/>
    </location>
    <ligand>
        <name>ATP</name>
        <dbReference type="ChEBI" id="CHEBI:30616"/>
    </ligand>
</feature>
<feature type="binding site" evidence="2">
    <location>
        <position position="338"/>
    </location>
    <ligand>
        <name>CDP</name>
        <dbReference type="ChEBI" id="CHEBI:58069"/>
    </ligand>
</feature>
<feature type="binding site" evidence="2">
    <location>
        <position position="343"/>
    </location>
    <ligand>
        <name>ADP</name>
        <dbReference type="ChEBI" id="CHEBI:456216"/>
    </ligand>
</feature>
<feature type="binding site" evidence="2">
    <location>
        <position position="343"/>
    </location>
    <ligand>
        <name>CDP</name>
        <dbReference type="ChEBI" id="CHEBI:58069"/>
    </ligand>
</feature>
<feature type="binding site" evidence="3">
    <location>
        <position position="344"/>
    </location>
    <ligand>
        <name>AMP</name>
        <dbReference type="ChEBI" id="CHEBI:456215"/>
    </ligand>
</feature>
<feature type="binding site" evidence="3">
    <location>
        <position position="344"/>
    </location>
    <ligand>
        <name>ATP</name>
        <dbReference type="ChEBI" id="CHEBI:30616"/>
    </ligand>
</feature>
<feature type="binding site" evidence="3">
    <location>
        <position position="375"/>
    </location>
    <ligand>
        <name>ATP</name>
        <dbReference type="ChEBI" id="CHEBI:30616"/>
    </ligand>
</feature>
<feature type="binding site" evidence="3">
    <location>
        <position position="375"/>
    </location>
    <ligand>
        <name>Mg(2+)</name>
        <dbReference type="ChEBI" id="CHEBI:18420"/>
    </ligand>
</feature>
<feature type="binding site" evidence="3">
    <location>
        <position position="376"/>
    </location>
    <ligand>
        <name>ATP</name>
        <dbReference type="ChEBI" id="CHEBI:30616"/>
    </ligand>
</feature>
<name>PGK_STENO</name>
<dbReference type="EC" id="2.7.2.3" evidence="2"/>
<dbReference type="EMBL" id="AF001848">
    <property type="protein sequence ID" value="AAB58240.1"/>
    <property type="molecule type" value="Genomic_DNA"/>
</dbReference>
<dbReference type="SMR" id="O02609"/>
<dbReference type="UniPathway" id="UPA00109">
    <property type="reaction ID" value="UER00185"/>
</dbReference>
<dbReference type="GO" id="GO:0005829">
    <property type="term" value="C:cytosol"/>
    <property type="evidence" value="ECO:0007669"/>
    <property type="project" value="TreeGrafter"/>
</dbReference>
<dbReference type="GO" id="GO:0043531">
    <property type="term" value="F:ADP binding"/>
    <property type="evidence" value="ECO:0007669"/>
    <property type="project" value="TreeGrafter"/>
</dbReference>
<dbReference type="GO" id="GO:0005524">
    <property type="term" value="F:ATP binding"/>
    <property type="evidence" value="ECO:0007669"/>
    <property type="project" value="UniProtKB-KW"/>
</dbReference>
<dbReference type="GO" id="GO:0046872">
    <property type="term" value="F:metal ion binding"/>
    <property type="evidence" value="ECO:0007669"/>
    <property type="project" value="UniProtKB-KW"/>
</dbReference>
<dbReference type="GO" id="GO:0004618">
    <property type="term" value="F:phosphoglycerate kinase activity"/>
    <property type="evidence" value="ECO:0007669"/>
    <property type="project" value="UniProtKB-EC"/>
</dbReference>
<dbReference type="GO" id="GO:0006094">
    <property type="term" value="P:gluconeogenesis"/>
    <property type="evidence" value="ECO:0007669"/>
    <property type="project" value="TreeGrafter"/>
</dbReference>
<dbReference type="GO" id="GO:0006096">
    <property type="term" value="P:glycolytic process"/>
    <property type="evidence" value="ECO:0007669"/>
    <property type="project" value="UniProtKB-UniPathway"/>
</dbReference>
<dbReference type="CDD" id="cd00318">
    <property type="entry name" value="Phosphoglycerate_kinase"/>
    <property type="match status" value="1"/>
</dbReference>
<dbReference type="FunFam" id="3.40.50.1260:FF:000003">
    <property type="entry name" value="Phosphoglycerate kinase"/>
    <property type="match status" value="1"/>
</dbReference>
<dbReference type="FunFam" id="3.40.50.1260:FF:000019">
    <property type="entry name" value="Phosphoglycerate kinase 1"/>
    <property type="match status" value="1"/>
</dbReference>
<dbReference type="Gene3D" id="3.40.50.1260">
    <property type="entry name" value="Phosphoglycerate kinase, N-terminal domain"/>
    <property type="match status" value="3"/>
</dbReference>
<dbReference type="HAMAP" id="MF_00145">
    <property type="entry name" value="Phosphoglyc_kinase"/>
    <property type="match status" value="1"/>
</dbReference>
<dbReference type="InterPro" id="IPR001576">
    <property type="entry name" value="Phosphoglycerate_kinase"/>
</dbReference>
<dbReference type="InterPro" id="IPR015911">
    <property type="entry name" value="Phosphoglycerate_kinase_CS"/>
</dbReference>
<dbReference type="InterPro" id="IPR015824">
    <property type="entry name" value="Phosphoglycerate_kinase_N"/>
</dbReference>
<dbReference type="InterPro" id="IPR036043">
    <property type="entry name" value="Phosphoglycerate_kinase_sf"/>
</dbReference>
<dbReference type="PANTHER" id="PTHR11406">
    <property type="entry name" value="PHOSPHOGLYCERATE KINASE"/>
    <property type="match status" value="1"/>
</dbReference>
<dbReference type="PANTHER" id="PTHR11406:SF0">
    <property type="entry name" value="PHOSPHOGLYCERATE KINASE"/>
    <property type="match status" value="1"/>
</dbReference>
<dbReference type="Pfam" id="PF00162">
    <property type="entry name" value="PGK"/>
    <property type="match status" value="1"/>
</dbReference>
<dbReference type="PIRSF" id="PIRSF000724">
    <property type="entry name" value="Pgk"/>
    <property type="match status" value="1"/>
</dbReference>
<dbReference type="PRINTS" id="PR00477">
    <property type="entry name" value="PHGLYCKINASE"/>
</dbReference>
<dbReference type="SUPFAM" id="SSF53748">
    <property type="entry name" value="Phosphoglycerate kinase"/>
    <property type="match status" value="1"/>
</dbReference>
<dbReference type="PROSITE" id="PS00111">
    <property type="entry name" value="PGLYCERATE_KINASE"/>
    <property type="match status" value="1"/>
</dbReference>
<gene>
    <name type="primary">PGK</name>
</gene>
<comment type="catalytic activity">
    <reaction evidence="2">
        <text>(2R)-3-phosphoglycerate + ATP = (2R)-3-phospho-glyceroyl phosphate + ADP</text>
        <dbReference type="Rhea" id="RHEA:14801"/>
        <dbReference type="ChEBI" id="CHEBI:30616"/>
        <dbReference type="ChEBI" id="CHEBI:57604"/>
        <dbReference type="ChEBI" id="CHEBI:58272"/>
        <dbReference type="ChEBI" id="CHEBI:456216"/>
        <dbReference type="EC" id="2.7.2.3"/>
    </reaction>
</comment>
<comment type="cofactor">
    <cofactor evidence="2">
        <name>Mg(2+)</name>
        <dbReference type="ChEBI" id="CHEBI:18420"/>
    </cofactor>
</comment>
<comment type="pathway">
    <text>Carbohydrate degradation; glycolysis; pyruvate from D-glyceraldehyde 3-phosphate: step 2/5.</text>
</comment>
<comment type="subunit">
    <text evidence="1">Monomer.</text>
</comment>
<comment type="similarity">
    <text evidence="4">Belongs to the phosphoglycerate kinase family.</text>
</comment>
<protein>
    <recommendedName>
        <fullName>Phosphoglycerate kinase</fullName>
        <ecNumber evidence="2">2.7.2.3</ecNumber>
    </recommendedName>
</protein>
<accession>O02609</accession>
<evidence type="ECO:0000250" key="1"/>
<evidence type="ECO:0000250" key="2">
    <source>
        <dbReference type="UniProtKB" id="P00558"/>
    </source>
</evidence>
<evidence type="ECO:0000250" key="3">
    <source>
        <dbReference type="UniProtKB" id="Q7SIB7"/>
    </source>
</evidence>
<evidence type="ECO:0000305" key="4"/>
<keyword id="KW-0067">ATP-binding</keyword>
<keyword id="KW-0324">Glycolysis</keyword>
<keyword id="KW-0418">Kinase</keyword>
<keyword id="KW-0460">Magnesium</keyword>
<keyword id="KW-0479">Metal-binding</keyword>
<keyword id="KW-0547">Nucleotide-binding</keyword>
<keyword id="KW-0808">Transferase</keyword>
<proteinExistence type="inferred from homology"/>
<sequence length="419" mass="45166">MLSKKLAIDHIPHLIKGKRVLMRVDFNVPIKEGKIKDLTRIQGALPSINYCLENGAESVVLMSHLGRPDGQRVEKHSLKPVLPAIEDLLKKKVQFLDDCVGSEVERECKSASKGKVILLENLRFHLAEEGKGVINGEKVKATKEDIAAFRKSLTSLGELYVNDGFGTAHRAHSSMVGVNVDTRAAGFLLKKELQYFSKILETPERPLTVVMGGAKVADKIQLIMKLLELADELIIGGGMAFTFNKVLDGSNIGKSLFDQEGAKIVPDIIKKAKERGVKIHLPVDAVAADKFEESAATQLVDLKTGAIPDGWMGLDIGPKTIEQNSRVILRAKTVFWNGPQGVFEMAPFSKGSLSMLDDIIKATQTGATSVAGGGDTVSLLGKVKGTTDKFSHVSTGGGASLELLQGKQLPGVVALSDRQ</sequence>